<keyword id="KW-0963">Cytoplasm</keyword>
<keyword id="KW-0448">Lipopolysaccharide biosynthesis</keyword>
<keyword id="KW-0548">Nucleotidyltransferase</keyword>
<keyword id="KW-1185">Reference proteome</keyword>
<keyword id="KW-0808">Transferase</keyword>
<name>KDSB1_ACTP2</name>
<protein>
    <recommendedName>
        <fullName evidence="1">3-deoxy-manno-octulosonate cytidylyltransferase 1</fullName>
        <ecNumber evidence="1">2.7.7.38</ecNumber>
    </recommendedName>
    <alternativeName>
        <fullName evidence="1">CMP-2-keto-3-deoxyoctulosonic acid synthase 1</fullName>
        <shortName evidence="1">CKS 1</shortName>
        <shortName evidence="1">CMP-KDO synthase 1</shortName>
    </alternativeName>
</protein>
<evidence type="ECO:0000255" key="1">
    <source>
        <dbReference type="HAMAP-Rule" id="MF_00057"/>
    </source>
</evidence>
<accession>A3MYF7</accession>
<proteinExistence type="inferred from homology"/>
<gene>
    <name evidence="1" type="primary">kdsB1</name>
    <name type="ordered locus">APL_0085</name>
</gene>
<sequence length="250" mass="28023">MNFTVIIPARYASSRLPRKPLLDIAGKPMIQHVWEKAQQAGATRVIIATDHPEIEATAKAFGAEVCMTSDQHNSGTERLAEVIEKMQIADDEIIVNVQGDEPLIPPVIVSQVAENLDRCQVNMATLAVKLTTKEELFNPNAVKALADKNGMALYFSRAPIPFARDHFADCDDAFVASQNYLRHIGIYAYRAGFVKQYVAWQPTQLEQLESLEQLRALWYGEKIHIELAKQAPQVGVDTQEDLERVRRILA</sequence>
<dbReference type="EC" id="2.7.7.38" evidence="1"/>
<dbReference type="EMBL" id="CP000569">
    <property type="protein sequence ID" value="ABN73193.1"/>
    <property type="molecule type" value="Genomic_DNA"/>
</dbReference>
<dbReference type="SMR" id="A3MYF7"/>
<dbReference type="STRING" id="416269.APL_0085"/>
<dbReference type="EnsemblBacteria" id="ABN73193">
    <property type="protein sequence ID" value="ABN73193"/>
    <property type="gene ID" value="APL_0085"/>
</dbReference>
<dbReference type="KEGG" id="apl:APL_0085"/>
<dbReference type="eggNOG" id="COG1212">
    <property type="taxonomic scope" value="Bacteria"/>
</dbReference>
<dbReference type="HOGENOM" id="CLU_065038_1_0_6"/>
<dbReference type="UniPathway" id="UPA00030"/>
<dbReference type="UniPathway" id="UPA00358">
    <property type="reaction ID" value="UER00476"/>
</dbReference>
<dbReference type="Proteomes" id="UP000001432">
    <property type="component" value="Chromosome"/>
</dbReference>
<dbReference type="GO" id="GO:0005829">
    <property type="term" value="C:cytosol"/>
    <property type="evidence" value="ECO:0007669"/>
    <property type="project" value="TreeGrafter"/>
</dbReference>
<dbReference type="GO" id="GO:0008690">
    <property type="term" value="F:3-deoxy-manno-octulosonate cytidylyltransferase activity"/>
    <property type="evidence" value="ECO:0007669"/>
    <property type="project" value="UniProtKB-UniRule"/>
</dbReference>
<dbReference type="GO" id="GO:0033468">
    <property type="term" value="P:CMP-keto-3-deoxy-D-manno-octulosonic acid biosynthetic process"/>
    <property type="evidence" value="ECO:0007669"/>
    <property type="project" value="UniProtKB-UniRule"/>
</dbReference>
<dbReference type="GO" id="GO:0009103">
    <property type="term" value="P:lipopolysaccharide biosynthetic process"/>
    <property type="evidence" value="ECO:0007669"/>
    <property type="project" value="UniProtKB-UniRule"/>
</dbReference>
<dbReference type="CDD" id="cd02517">
    <property type="entry name" value="CMP-KDO-Synthetase"/>
    <property type="match status" value="1"/>
</dbReference>
<dbReference type="FunFam" id="3.90.550.10:FF:000011">
    <property type="entry name" value="3-deoxy-manno-octulosonate cytidylyltransferase"/>
    <property type="match status" value="1"/>
</dbReference>
<dbReference type="Gene3D" id="3.90.550.10">
    <property type="entry name" value="Spore Coat Polysaccharide Biosynthesis Protein SpsA, Chain A"/>
    <property type="match status" value="1"/>
</dbReference>
<dbReference type="HAMAP" id="MF_00057">
    <property type="entry name" value="KdsB"/>
    <property type="match status" value="1"/>
</dbReference>
<dbReference type="InterPro" id="IPR003329">
    <property type="entry name" value="Cytidylyl_trans"/>
</dbReference>
<dbReference type="InterPro" id="IPR004528">
    <property type="entry name" value="KdsB"/>
</dbReference>
<dbReference type="InterPro" id="IPR029044">
    <property type="entry name" value="Nucleotide-diphossugar_trans"/>
</dbReference>
<dbReference type="NCBIfam" id="TIGR00466">
    <property type="entry name" value="kdsB"/>
    <property type="match status" value="1"/>
</dbReference>
<dbReference type="NCBIfam" id="NF003950">
    <property type="entry name" value="PRK05450.1-3"/>
    <property type="match status" value="1"/>
</dbReference>
<dbReference type="NCBIfam" id="NF003952">
    <property type="entry name" value="PRK05450.1-5"/>
    <property type="match status" value="1"/>
</dbReference>
<dbReference type="NCBIfam" id="NF009905">
    <property type="entry name" value="PRK13368.1"/>
    <property type="match status" value="1"/>
</dbReference>
<dbReference type="PANTHER" id="PTHR42866">
    <property type="entry name" value="3-DEOXY-MANNO-OCTULOSONATE CYTIDYLYLTRANSFERASE"/>
    <property type="match status" value="1"/>
</dbReference>
<dbReference type="PANTHER" id="PTHR42866:SF2">
    <property type="entry name" value="3-DEOXY-MANNO-OCTULOSONATE CYTIDYLYLTRANSFERASE, MITOCHONDRIAL"/>
    <property type="match status" value="1"/>
</dbReference>
<dbReference type="Pfam" id="PF02348">
    <property type="entry name" value="CTP_transf_3"/>
    <property type="match status" value="1"/>
</dbReference>
<dbReference type="SUPFAM" id="SSF53448">
    <property type="entry name" value="Nucleotide-diphospho-sugar transferases"/>
    <property type="match status" value="1"/>
</dbReference>
<feature type="chain" id="PRO_0000369989" description="3-deoxy-manno-octulosonate cytidylyltransferase 1">
    <location>
        <begin position="1"/>
        <end position="250"/>
    </location>
</feature>
<comment type="function">
    <text evidence="1">Activates KDO (a required 8-carbon sugar) for incorporation into bacterial lipopolysaccharide in Gram-negative bacteria.</text>
</comment>
<comment type="catalytic activity">
    <reaction evidence="1">
        <text>3-deoxy-alpha-D-manno-oct-2-ulosonate + CTP = CMP-3-deoxy-beta-D-manno-octulosonate + diphosphate</text>
        <dbReference type="Rhea" id="RHEA:23448"/>
        <dbReference type="ChEBI" id="CHEBI:33019"/>
        <dbReference type="ChEBI" id="CHEBI:37563"/>
        <dbReference type="ChEBI" id="CHEBI:85986"/>
        <dbReference type="ChEBI" id="CHEBI:85987"/>
        <dbReference type="EC" id="2.7.7.38"/>
    </reaction>
</comment>
<comment type="pathway">
    <text evidence="1">Nucleotide-sugar biosynthesis; CMP-3-deoxy-D-manno-octulosonate biosynthesis; CMP-3-deoxy-D-manno-octulosonate from 3-deoxy-D-manno-octulosonate and CTP: step 1/1.</text>
</comment>
<comment type="pathway">
    <text evidence="1">Bacterial outer membrane biogenesis; lipopolysaccharide biosynthesis.</text>
</comment>
<comment type="subcellular location">
    <subcellularLocation>
        <location evidence="1">Cytoplasm</location>
    </subcellularLocation>
</comment>
<comment type="similarity">
    <text evidence="1">Belongs to the KdsB family.</text>
</comment>
<organism>
    <name type="scientific">Actinobacillus pleuropneumoniae serotype 5b (strain L20)</name>
    <dbReference type="NCBI Taxonomy" id="416269"/>
    <lineage>
        <taxon>Bacteria</taxon>
        <taxon>Pseudomonadati</taxon>
        <taxon>Pseudomonadota</taxon>
        <taxon>Gammaproteobacteria</taxon>
        <taxon>Pasteurellales</taxon>
        <taxon>Pasteurellaceae</taxon>
        <taxon>Actinobacillus</taxon>
    </lineage>
</organism>
<reference key="1">
    <citation type="journal article" date="2008" name="J. Bacteriol.">
        <title>The complete genome sequence of Actinobacillus pleuropneumoniae L20 (serotype 5b).</title>
        <authorList>
            <person name="Foote S.J."/>
            <person name="Bosse J.T."/>
            <person name="Bouevitch A.B."/>
            <person name="Langford P.R."/>
            <person name="Young N.M."/>
            <person name="Nash J.H.E."/>
        </authorList>
    </citation>
    <scope>NUCLEOTIDE SEQUENCE [LARGE SCALE GENOMIC DNA]</scope>
    <source>
        <strain>L20</strain>
    </source>
</reference>